<comment type="function">
    <text evidence="2 7 9 10">Transcriptional repressor (PubMed:18347096). Recognizes and binds to the consensus sequence '5-[CG]NG[CG]GGGCA[CA]CC-3' (By similarity). May act as a tumor suppressor (PubMed:16269335, PubMed:18347096). Involved in development of head, face, limbs and ventral body wall (PubMed:10655551). Involved in down-regulation of SIRT1 and thereby is involved in regulation of p53/TP53-dependent apoptotic DNA-damage responses (PubMed:16269335). The specific target gene promoter association seems to be depend on corepressors, such as CTBP1 or CTBP2 and MTA1 (By similarity). In cooperation with MTA1 (indicative for an association with the NuRD complex) represses transcription from CCND1/cyclin-D1 and CDKN1C/p57Kip2 specifically in quiescent cells (By similarity). Involved in regulation of the Wnt signaling pathway probably by association with TCF7L2 and preventing TCF7L2 and CTNNB1 association with promoters of TCF-responsive genes (By similarity). Seems to repress transcription from E2F1 and ATOH1 which involves ARID1A, indicative for the participation of a distinct SWI/SNF-type chromatin-remodeling complex (By similarity). Probably represses transcription from ACKR3, FGFBP1 and EFNA1 (By similarity).</text>
</comment>
<comment type="subunit">
    <text evidence="2 9">Self-associates (By similarity). Interacts with HIC2 (By similarity). Interacts with CTBP1 and CTBP2 (By similarity). Interacts with TCF7L2 and ARID1A (By similarity). Interacts with MTA1 and MBD3; indicative for an association with the NuRD complex (By similarity). Interacts with SIRT1 (PubMed:16269335).</text>
</comment>
<comment type="interaction">
    <interactant intactId="EBI-5236187">
        <id>Q9R1Y5</id>
    </interactant>
    <interactant intactId="EBI-1802585">
        <id>Q923E4</id>
        <label>Sirt1</label>
    </interactant>
    <organismsDiffer>false</organismsDiffer>
    <experiments>2</experiments>
</comment>
<comment type="interaction">
    <interactant intactId="EBI-5236187">
        <id>Q9R1Y5</id>
    </interactant>
    <interactant intactId="EBI-646713">
        <id>Q924A0</id>
        <label>Tcf7l2</label>
    </interactant>
    <organismsDiffer>false</organismsDiffer>
    <experiments>4</experiments>
</comment>
<comment type="subcellular location">
    <subcellularLocation>
        <location evidence="11">Nucleus</location>
    </subcellularLocation>
</comment>
<comment type="alternative products">
    <event type="alternative splicing"/>
    <isoform>
        <id>Q9R1Y5-1</id>
        <name>1</name>
        <sequence type="displayed"/>
    </isoform>
    <text>A number of isoforms may be produced.</text>
</comment>
<comment type="tissue specificity">
    <text evidence="7">Ubiquitously expressed with highest levels in heart and lung.</text>
</comment>
<comment type="developmental stage">
    <text evidence="6">Expression is first detected in the embryo after 9 dpc. In the embryo, expression is found in restricted regions of somite derivatives, limb anlagen and cranio-facial mesenchyme. In the fetus, it is additionally expressed in mesenchymes apposed to precartilaginous condensations, at many interfaces to budding epithelia of inner organs, and weakly in muscles.</text>
</comment>
<comment type="domain">
    <text evidence="1">The BTB domain inhibits the binding to a single consensus binding site, but mediates cooperative binding to multiple binding sites.</text>
</comment>
<comment type="PTM">
    <text evidence="1">Acetylated on several residues, including Lys-333. Lys-333 is deacetylated by SIRT1 (By similarity).</text>
</comment>
<comment type="PTM">
    <text evidence="1">Sumoylated on Lys-333 by a PIAS family member, which enhances interaction with MTA1, positively regulates transcriptional repression activity and is enhanced by HDAC4.</text>
</comment>
<comment type="disruption phenotype">
    <text evidence="7 8">Impaired development resulting in embryonic and perinatal lethality (PubMed:10655551, PubMed:12539045). Serious developmental anomalies including acrania, exencephaly, cleft palate, omphalocele and limb abnormalities (PubMed:10655551). Mice disrupted in the germ line for only one allele of Hic1 develop many different spontaneous malignant tumors, including a predominance of epithelial cancers in males and lymphomas and sarcomas in females (PubMed:12539045). The complete loss of Hic1 function in the heterozygous mice seems to involve dense methylation of the promoter of the remaining wild-type allele (PubMed:12539045).</text>
</comment>
<comment type="similarity">
    <text evidence="11">Belongs to the krueppel C2H2-type zinc-finger protein family. Hic subfamily.</text>
</comment>
<comment type="sequence caution" evidence="11">
    <conflict type="erroneous initiation">
        <sequence resource="EMBL-CDS" id="AAD30654"/>
    </conflict>
    <text>Extended N-terminus.</text>
</comment>
<comment type="sequence caution" evidence="11">
    <conflict type="erroneous gene model prediction">
        <sequence resource="EMBL-CDS" id="AAD30655"/>
    </conflict>
</comment>
<gene>
    <name type="primary">Hic1</name>
</gene>
<reference key="1">
    <citation type="journal article" date="1999" name="Hum. Mol. Genet.">
        <title>Isolation and embryonic expression of the novel mouse gene Hic1, the homologue of HIC1, a candidate gene for the Miller-Dieker syndrome.</title>
        <authorList>
            <person name="Grimm C."/>
            <person name="Spoerle R."/>
            <person name="Schmid T.E."/>
            <person name="Adler I.-D."/>
            <person name="Adamski J."/>
            <person name="Schughart K."/>
            <person name="Graw J."/>
        </authorList>
    </citation>
    <scope>NUCLEOTIDE SEQUENCE [GENOMIC DNA]</scope>
    <scope>NUCLEOTIDE SEQUENCE [MRNA] OF 13-733</scope>
    <scope>DEVELOPMENTAL STAGE</scope>
    <source>
        <strain>129/Sv</strain>
        <strain>Swiss Webster</strain>
        <tissue>Embryo</tissue>
    </source>
</reference>
<reference key="2">
    <citation type="journal article" date="2000" name="Hum. Mol. Genet.">
        <title>Mice deficient in the candidate tumor suppressor gene Hic1 exhibit developmental defects of structures affected in the Miller-Dieker syndrome.</title>
        <authorList>
            <person name="Carter M.G."/>
            <person name="Johns M.A."/>
            <person name="Zeng X."/>
            <person name="Zhou L."/>
            <person name="Zink M.C."/>
            <person name="Mankowski J.L."/>
            <person name="Donovan D.M."/>
            <person name="Baylin S.B."/>
        </authorList>
    </citation>
    <scope>NUCLEOTIDE SEQUENCE</scope>
    <scope>FUNCTION</scope>
    <scope>TISSUE SPECIFICITY</scope>
    <scope>DISRUPTION PHENOTYPE</scope>
</reference>
<reference key="3">
    <citation type="journal article" date="2009" name="PLoS Biol.">
        <title>Lineage-specific biology revealed by a finished genome assembly of the mouse.</title>
        <authorList>
            <person name="Church D.M."/>
            <person name="Goodstadt L."/>
            <person name="Hillier L.W."/>
            <person name="Zody M.C."/>
            <person name="Goldstein S."/>
            <person name="She X."/>
            <person name="Bult C.J."/>
            <person name="Agarwala R."/>
            <person name="Cherry J.L."/>
            <person name="DiCuccio M."/>
            <person name="Hlavina W."/>
            <person name="Kapustin Y."/>
            <person name="Meric P."/>
            <person name="Maglott D."/>
            <person name="Birtle Z."/>
            <person name="Marques A.C."/>
            <person name="Graves T."/>
            <person name="Zhou S."/>
            <person name="Teague B."/>
            <person name="Potamousis K."/>
            <person name="Churas C."/>
            <person name="Place M."/>
            <person name="Herschleb J."/>
            <person name="Runnheim R."/>
            <person name="Forrest D."/>
            <person name="Amos-Landgraf J."/>
            <person name="Schwartz D.C."/>
            <person name="Cheng Z."/>
            <person name="Lindblad-Toh K."/>
            <person name="Eichler E.E."/>
            <person name="Ponting C.P."/>
        </authorList>
    </citation>
    <scope>NUCLEOTIDE SEQUENCE [LARGE SCALE GENOMIC DNA]</scope>
    <source>
        <strain>C57BL/6J</strain>
    </source>
</reference>
<reference key="4">
    <citation type="journal article" date="2001" name="J. Biol. Chem.">
        <title>Identification in the human candidate tumor suppressor gene HIC-1 of a new major alternative TATA-less promoter positively regulated by p53.</title>
        <authorList>
            <person name="Guerardel C."/>
            <person name="Deltour S."/>
            <person name="Pinte S."/>
            <person name="Monte D."/>
            <person name="Begue A."/>
            <person name="Godwin A.K."/>
            <person name="Leprince D."/>
        </authorList>
    </citation>
    <scope>NUCLEOTIDE SEQUENCE [GENOMIC DNA] OF 1-20</scope>
    <scope>PROMOTER USAGE</scope>
</reference>
<reference key="5">
    <citation type="journal article" date="1999" name="FEBS Lett.">
        <title>Evolutionary divergence in the broad complex, tramtrack and bric a brac/poxviruses and zinc finger domain from the candidate tumor suppressor gene hypermethylated in cancer.</title>
        <authorList>
            <person name="Guerardel C."/>
            <person name="Deltour S."/>
            <person name="Leprince D."/>
        </authorList>
    </citation>
    <scope>NUCLEOTIDE SEQUENCE [GENOMIC DNA] OF 20-179</scope>
    <source>
        <strain>129/Sv</strain>
        <tissue>Liver</tissue>
    </source>
</reference>
<reference key="6">
    <citation type="journal article" date="2003" name="Nat. Genet.">
        <title>Heterozygous disruption of Hic1 predisposes mice to a gender-dependent spectrum of malignant tumors.</title>
        <authorList>
            <person name="Chen W.Y."/>
            <person name="Zeng X."/>
            <person name="Carter M.G."/>
            <person name="Morrell C.N."/>
            <person name="Chiu Yen R.W."/>
            <person name="Esteller M."/>
            <person name="Watkins D.N."/>
            <person name="Herman J.G."/>
            <person name="Mankowski J.L."/>
            <person name="Baylin S.B."/>
        </authorList>
    </citation>
    <scope>DISRUPTION PHENOTYPE</scope>
</reference>
<reference key="7">
    <citation type="journal article" date="2005" name="Cell">
        <title>Tumor suppressor HIC1 directly regulates SIRT1 to modulate p53-dependent DNA-damage responses.</title>
        <authorList>
            <person name="Chen W.Y."/>
            <person name="Wang D.H."/>
            <person name="Yen R.C."/>
            <person name="Luo J."/>
            <person name="Gu W."/>
            <person name="Baylin S.B."/>
        </authorList>
    </citation>
    <scope>FUNCTION</scope>
    <scope>INTERACTION WITH SIRT1</scope>
</reference>
<reference key="8">
    <citation type="journal article" date="2008" name="Genes Dev.">
        <title>Cooperation between the Hic1 and Ptch1 tumor suppressors in medulloblastoma.</title>
        <authorList>
            <person name="Briggs K.J."/>
            <person name="Corcoran-Schwartz I.M."/>
            <person name="Zhang W."/>
            <person name="Harcke T."/>
            <person name="Devereux W.L."/>
            <person name="Baylin S.B."/>
            <person name="Eberhart C.G."/>
            <person name="Watkins D.N."/>
        </authorList>
    </citation>
    <scope>FUNCTION</scope>
</reference>
<reference key="9">
    <citation type="journal article" date="2008" name="Genes Dev.">
        <authorList>
            <person name="Briggs K.J."/>
            <person name="Corcoran-Schwartz I.M."/>
            <person name="Zhang W."/>
            <person name="Harcke T."/>
            <person name="Devereux W.L."/>
            <person name="Baylin S.B."/>
            <person name="Eberhart C.G."/>
            <person name="Watkins D.N."/>
        </authorList>
    </citation>
    <scope>ERRATUM OF PUBMED:18347096</scope>
</reference>
<reference key="10">
    <citation type="journal article" date="2010" name="Cell">
        <title>A tissue-specific atlas of mouse protein phosphorylation and expression.</title>
        <authorList>
            <person name="Huttlin E.L."/>
            <person name="Jedrychowski M.P."/>
            <person name="Elias J.E."/>
            <person name="Goswami T."/>
            <person name="Rad R."/>
            <person name="Beausoleil S.A."/>
            <person name="Villen J."/>
            <person name="Haas W."/>
            <person name="Sowa M.E."/>
            <person name="Gygi S.P."/>
        </authorList>
    </citation>
    <scope>PHOSPHORYLATION [LARGE SCALE ANALYSIS] AT SER-704</scope>
    <scope>IDENTIFICATION BY MASS SPECTROMETRY [LARGE SCALE ANALYSIS]</scope>
    <source>
        <tissue>Brown adipose tissue</tissue>
        <tissue>Heart</tissue>
        <tissue>Lung</tissue>
        <tissue>Spleen</tissue>
    </source>
</reference>
<reference key="11">
    <citation type="journal article" date="2014" name="Mol. Cell. Proteomics">
        <title>Immunoaffinity enrichment and mass spectrometry analysis of protein methylation.</title>
        <authorList>
            <person name="Guo A."/>
            <person name="Gu H."/>
            <person name="Zhou J."/>
            <person name="Mulhern D."/>
            <person name="Wang Y."/>
            <person name="Lee K.A."/>
            <person name="Yang V."/>
            <person name="Aguiar M."/>
            <person name="Kornhauser J."/>
            <person name="Jia X."/>
            <person name="Ren J."/>
            <person name="Beausoleil S.A."/>
            <person name="Silva J.C."/>
            <person name="Vemulapalli V."/>
            <person name="Bedford M.T."/>
            <person name="Comb M.J."/>
        </authorList>
    </citation>
    <scope>METHYLATION [LARGE SCALE ANALYSIS] AT ARG-159</scope>
    <scope>IDENTIFICATION BY MASS SPECTROMETRY [LARGE SCALE ANALYSIS]</scope>
    <source>
        <tissue>Embryo</tissue>
    </source>
</reference>
<organism>
    <name type="scientific">Mus musculus</name>
    <name type="common">Mouse</name>
    <dbReference type="NCBI Taxonomy" id="10090"/>
    <lineage>
        <taxon>Eukaryota</taxon>
        <taxon>Metazoa</taxon>
        <taxon>Chordata</taxon>
        <taxon>Craniata</taxon>
        <taxon>Vertebrata</taxon>
        <taxon>Euteleostomi</taxon>
        <taxon>Mammalia</taxon>
        <taxon>Eutheria</taxon>
        <taxon>Euarchontoglires</taxon>
        <taxon>Glires</taxon>
        <taxon>Rodentia</taxon>
        <taxon>Myomorpha</taxon>
        <taxon>Muroidea</taxon>
        <taxon>Muridae</taxon>
        <taxon>Murinae</taxon>
        <taxon>Mus</taxon>
        <taxon>Mus</taxon>
    </lineage>
</organism>
<feature type="chain" id="PRO_0000046943" description="Hypermethylated in cancer 1 protein">
    <location>
        <begin position="1"/>
        <end position="733"/>
    </location>
</feature>
<feature type="domain" description="BTB" evidence="3">
    <location>
        <begin position="47"/>
        <end position="110"/>
    </location>
</feature>
<feature type="zinc finger region" description="C2H2-type 1" evidence="4">
    <location>
        <begin position="437"/>
        <end position="464"/>
    </location>
</feature>
<feature type="zinc finger region" description="C2H2-type 2" evidence="4">
    <location>
        <begin position="507"/>
        <end position="534"/>
    </location>
</feature>
<feature type="zinc finger region" description="C2H2-type 3" evidence="4">
    <location>
        <begin position="535"/>
        <end position="562"/>
    </location>
</feature>
<feature type="zinc finger region" description="C2H2-type 4" evidence="4">
    <location>
        <begin position="563"/>
        <end position="590"/>
    </location>
</feature>
<feature type="zinc finger region" description="C2H2-type 5" evidence="4">
    <location>
        <begin position="591"/>
        <end position="618"/>
    </location>
</feature>
<feature type="region of interest" description="Mediates HDAC-dependent transcriptional repression" evidence="1">
    <location>
        <begin position="154"/>
        <end position="315"/>
    </location>
</feature>
<feature type="region of interest" description="Disordered" evidence="5">
    <location>
        <begin position="189"/>
        <end position="209"/>
    </location>
</feature>
<feature type="region of interest" description="Disordered" evidence="5">
    <location>
        <begin position="241"/>
        <end position="421"/>
    </location>
</feature>
<feature type="region of interest" description="Interaction with CTBP1" evidence="1">
    <location>
        <begin position="241"/>
        <end position="247"/>
    </location>
</feature>
<feature type="compositionally biased region" description="Pro residues" evidence="5">
    <location>
        <begin position="193"/>
        <end position="206"/>
    </location>
</feature>
<feature type="compositionally biased region" description="Basic and acidic residues" evidence="5">
    <location>
        <begin position="344"/>
        <end position="361"/>
    </location>
</feature>
<feature type="compositionally biased region" description="Pro residues" evidence="5">
    <location>
        <begin position="368"/>
        <end position="380"/>
    </location>
</feature>
<feature type="modified residue" description="Omega-N-methylarginine" evidence="13">
    <location>
        <position position="159"/>
    </location>
</feature>
<feature type="modified residue" description="Phosphoserine" evidence="2">
    <location>
        <position position="237"/>
    </location>
</feature>
<feature type="modified residue" description="Phosphoserine" evidence="2">
    <location>
        <position position="248"/>
    </location>
</feature>
<feature type="modified residue" description="N6-acetyllysine; alternate" evidence="2">
    <location>
        <position position="333"/>
    </location>
</feature>
<feature type="modified residue" description="Phosphoserine" evidence="2">
    <location>
        <position position="366"/>
    </location>
</feature>
<feature type="modified residue" description="Phosphoserine" evidence="12">
    <location>
        <position position="704"/>
    </location>
</feature>
<feature type="cross-link" description="Glycyl lysine isopeptide (Lys-Gly) (interchain with G-Cter in SUMO); alternate" evidence="1">
    <location>
        <position position="333"/>
    </location>
</feature>
<feature type="sequence conflict" description="In Ref. 1; AAD30654/AAD30655 and 4; no nucleotide entry." evidence="11" ref="1 4">
    <original>T</original>
    <variation>M</variation>
    <location>
        <position position="19"/>
    </location>
</feature>
<feature type="sequence conflict" description="In Ref. 1; AAD30654." evidence="11" ref="1">
    <original>N</original>
    <variation>S</variation>
    <location>
        <position position="83"/>
    </location>
</feature>
<evidence type="ECO:0000250" key="1"/>
<evidence type="ECO:0000250" key="2">
    <source>
        <dbReference type="UniProtKB" id="Q14526"/>
    </source>
</evidence>
<evidence type="ECO:0000255" key="3">
    <source>
        <dbReference type="PROSITE-ProRule" id="PRU00037"/>
    </source>
</evidence>
<evidence type="ECO:0000255" key="4">
    <source>
        <dbReference type="PROSITE-ProRule" id="PRU00042"/>
    </source>
</evidence>
<evidence type="ECO:0000256" key="5">
    <source>
        <dbReference type="SAM" id="MobiDB-lite"/>
    </source>
</evidence>
<evidence type="ECO:0000269" key="6">
    <source>
    </source>
</evidence>
<evidence type="ECO:0000269" key="7">
    <source>
    </source>
</evidence>
<evidence type="ECO:0000269" key="8">
    <source>
    </source>
</evidence>
<evidence type="ECO:0000269" key="9">
    <source>
    </source>
</evidence>
<evidence type="ECO:0000269" key="10">
    <source>
    </source>
</evidence>
<evidence type="ECO:0000305" key="11"/>
<evidence type="ECO:0007744" key="12">
    <source>
    </source>
</evidence>
<evidence type="ECO:0007744" key="13">
    <source>
    </source>
</evidence>
<accession>Q9R1Y5</accession>
<accession>B1ARH0</accession>
<accession>Q9R1Y6</accession>
<accession>Q9R2B0</accession>
<sequence>MTFPEADILLKSGECAGQTMLDTMEAPGHSRQLLLQLNNQRTKGFLCDVIIVVQNALFRAHKNVLAASSAYLKSLVVHDNLLNLDHDMVSPAVFRLVLDFIYTGRLTDSVEAAAAAAVAPGAEPSLGAVLAAASYLQIPDLVALCKKRLKRHGKYCHLRGGGSGGGGYAPYGRPGRGLRAATPVIQACYSSPAGPPPPPAAEPPSGPDAAVNTHCAELYASGPGPAASLCAPERRCSPLCGLDLSKKSPPGSSVPERPLSERELPPRPDSPPGAGPAVYKEPSLALPPLPPLPFQKLEEAVPTPDPFRGSGGSPGPEPPGRPDGSSLLYRWMKHEPGLGSYGDELVRDRGSPGERLEERGGDPAASPGGPPLGLVPPPRYPGSLDGPGTGADGDDYKSSSEETGSSEDPSPPGGHLEGYPCPHLAYGEPESFGDNLYVCIPCGKGFPSSEQLNAHVEAHVEEEEALYGRAEAAEVAAGAAGLGPPFGGGGDKVTGAPGGLGELLRPYRCASCDKSYKDPATLRQHEKTHWLTRPYPCTICGKKFTQRGTMTRHMRSHLGLKPFACDACGMRFTRQYRLTEHMRIHSGEKPYECQVCGGKFAQQRNLISHMKMHAVGGAAGAAGALAGLGGLPGVPGPDGKGKLDFPEGVFAVARLTAEQLSLKQQDKAAAAELLAQTTHFLHDPKVALESLYPLAKFTAELGLSPDKAAEVLSQGAHLAAGPDSRTIDRFSPT</sequence>
<dbReference type="EMBL" id="AF036334">
    <property type="protein sequence ID" value="AAD30654.1"/>
    <property type="status" value="ALT_INIT"/>
    <property type="molecule type" value="mRNA"/>
</dbReference>
<dbReference type="EMBL" id="AF036582">
    <property type="protein sequence ID" value="AAD30655.1"/>
    <property type="status" value="ALT_SEQ"/>
    <property type="molecule type" value="Genomic_DNA"/>
</dbReference>
<dbReference type="EMBL" id="AL603905">
    <property type="status" value="NOT_ANNOTATED_CDS"/>
    <property type="molecule type" value="Genomic_DNA"/>
</dbReference>
<dbReference type="EMBL" id="AJ132691">
    <property type="protein sequence ID" value="CAB44493.1"/>
    <property type="molecule type" value="Genomic_DNA"/>
</dbReference>
<dbReference type="RefSeq" id="NP_001091673.1">
    <molecule id="Q9R1Y5-1"/>
    <property type="nucleotide sequence ID" value="NM_001098203.1"/>
</dbReference>
<dbReference type="SMR" id="Q9R1Y5"/>
<dbReference type="BioGRID" id="200302">
    <property type="interactions" value="1"/>
</dbReference>
<dbReference type="FunCoup" id="Q9R1Y5">
    <property type="interactions" value="752"/>
</dbReference>
<dbReference type="IntAct" id="Q9R1Y5">
    <property type="interactions" value="3"/>
</dbReference>
<dbReference type="MINT" id="Q9R1Y5"/>
<dbReference type="STRING" id="10090.ENSMUSP00000053483"/>
<dbReference type="GlyGen" id="Q9R1Y5">
    <property type="glycosylation" value="1 site"/>
</dbReference>
<dbReference type="iPTMnet" id="Q9R1Y5"/>
<dbReference type="PhosphoSitePlus" id="Q9R1Y5"/>
<dbReference type="jPOST" id="Q9R1Y5"/>
<dbReference type="PaxDb" id="10090-ENSMUSP00000053483"/>
<dbReference type="PeptideAtlas" id="Q9R1Y5"/>
<dbReference type="ProteomicsDB" id="269790">
    <molecule id="Q9R1Y5-1"/>
</dbReference>
<dbReference type="Pumba" id="Q9R1Y5"/>
<dbReference type="DNASU" id="15248"/>
<dbReference type="Ensembl" id="ENSMUST00000131720.3">
    <molecule id="Q9R1Y5-1"/>
    <property type="protein sequence ID" value="ENSMUSP00001091661.1"/>
    <property type="gene ID" value="ENSMUSG00000043099.6"/>
</dbReference>
<dbReference type="GeneID" id="15248"/>
<dbReference type="KEGG" id="mmu:15248"/>
<dbReference type="UCSC" id="uc007kdc.1">
    <molecule id="Q9R1Y5-1"/>
    <property type="organism name" value="mouse"/>
</dbReference>
<dbReference type="AGR" id="MGI:1338010"/>
<dbReference type="CTD" id="3090"/>
<dbReference type="MGI" id="MGI:1338010">
    <property type="gene designation" value="Hic1"/>
</dbReference>
<dbReference type="eggNOG" id="KOG1721">
    <property type="taxonomic scope" value="Eukaryota"/>
</dbReference>
<dbReference type="GeneTree" id="ENSGT00940000161725"/>
<dbReference type="InParanoid" id="Q9R1Y5"/>
<dbReference type="OrthoDB" id="8922241at2759"/>
<dbReference type="TreeFam" id="TF333488"/>
<dbReference type="Reactome" id="R-MMU-3232118">
    <property type="pathway name" value="SUMOylation of transcription factors"/>
</dbReference>
<dbReference type="BioGRID-ORCS" id="15248">
    <property type="hits" value="3 hits in 77 CRISPR screens"/>
</dbReference>
<dbReference type="ChiTaRS" id="Hic1">
    <property type="organism name" value="mouse"/>
</dbReference>
<dbReference type="PRO" id="PR:Q9R1Y5"/>
<dbReference type="Proteomes" id="UP000000589">
    <property type="component" value="Chromosome 11"/>
</dbReference>
<dbReference type="RNAct" id="Q9R1Y5">
    <property type="molecule type" value="protein"/>
</dbReference>
<dbReference type="GO" id="GO:0000785">
    <property type="term" value="C:chromatin"/>
    <property type="evidence" value="ECO:0000314"/>
    <property type="project" value="UniProtKB"/>
</dbReference>
<dbReference type="GO" id="GO:0005634">
    <property type="term" value="C:nucleus"/>
    <property type="evidence" value="ECO:0007669"/>
    <property type="project" value="UniProtKB-SubCell"/>
</dbReference>
<dbReference type="GO" id="GO:0003700">
    <property type="term" value="F:DNA-binding transcription factor activity"/>
    <property type="evidence" value="ECO:0000250"/>
    <property type="project" value="UniProtKB"/>
</dbReference>
<dbReference type="GO" id="GO:0001227">
    <property type="term" value="F:DNA-binding transcription repressor activity, RNA polymerase II-specific"/>
    <property type="evidence" value="ECO:0007669"/>
    <property type="project" value="Ensembl"/>
</dbReference>
<dbReference type="GO" id="GO:0042826">
    <property type="term" value="F:histone deacetylase binding"/>
    <property type="evidence" value="ECO:0000250"/>
    <property type="project" value="UniProtKB"/>
</dbReference>
<dbReference type="GO" id="GO:0043565">
    <property type="term" value="F:sequence-specific DNA binding"/>
    <property type="evidence" value="ECO:0000250"/>
    <property type="project" value="UniProtKB"/>
</dbReference>
<dbReference type="GO" id="GO:1990837">
    <property type="term" value="F:sequence-specific double-stranded DNA binding"/>
    <property type="evidence" value="ECO:0007669"/>
    <property type="project" value="Ensembl"/>
</dbReference>
<dbReference type="GO" id="GO:0008270">
    <property type="term" value="F:zinc ion binding"/>
    <property type="evidence" value="ECO:0007669"/>
    <property type="project" value="UniProtKB-KW"/>
</dbReference>
<dbReference type="GO" id="GO:0008630">
    <property type="term" value="P:intrinsic apoptotic signaling pathway in response to DNA damage"/>
    <property type="evidence" value="ECO:0000314"/>
    <property type="project" value="UniProtKB"/>
</dbReference>
<dbReference type="GO" id="GO:0000122">
    <property type="term" value="P:negative regulation of transcription by RNA polymerase II"/>
    <property type="evidence" value="ECO:0000314"/>
    <property type="project" value="UniProtKB"/>
</dbReference>
<dbReference type="GO" id="GO:0030178">
    <property type="term" value="P:negative regulation of Wnt signaling pathway"/>
    <property type="evidence" value="ECO:0000250"/>
    <property type="project" value="UniProtKB"/>
</dbReference>
<dbReference type="GO" id="GO:0043517">
    <property type="term" value="P:positive regulation of DNA damage response, signal transduction by p53 class mediator"/>
    <property type="evidence" value="ECO:0000315"/>
    <property type="project" value="UniProtKB"/>
</dbReference>
<dbReference type="GO" id="GO:0016055">
    <property type="term" value="P:Wnt signaling pathway"/>
    <property type="evidence" value="ECO:0007669"/>
    <property type="project" value="UniProtKB-KW"/>
</dbReference>
<dbReference type="CDD" id="cd18333">
    <property type="entry name" value="BTB_POZ_ZBTB29_HIC1"/>
    <property type="match status" value="1"/>
</dbReference>
<dbReference type="FunFam" id="3.30.160.60:FF:000195">
    <property type="entry name" value="Hypermethylated in cancer 1 protein-like"/>
    <property type="match status" value="2"/>
</dbReference>
<dbReference type="FunFam" id="3.30.160.60:FF:000746">
    <property type="entry name" value="hypermethylated in cancer 2 protein-like"/>
    <property type="match status" value="1"/>
</dbReference>
<dbReference type="FunFam" id="3.30.710.10:FF:000032">
    <property type="entry name" value="hypermethylated in cancer 2 protein-like"/>
    <property type="match status" value="1"/>
</dbReference>
<dbReference type="FunFam" id="3.30.160.60:FF:001289">
    <property type="entry name" value="Zinc finger protein 574"/>
    <property type="match status" value="1"/>
</dbReference>
<dbReference type="Gene3D" id="3.30.160.60">
    <property type="entry name" value="Classic Zinc Finger"/>
    <property type="match status" value="4"/>
</dbReference>
<dbReference type="Gene3D" id="3.30.710.10">
    <property type="entry name" value="Potassium Channel Kv1.1, Chain A"/>
    <property type="match status" value="1"/>
</dbReference>
<dbReference type="InterPro" id="IPR000210">
    <property type="entry name" value="BTB/POZ_dom"/>
</dbReference>
<dbReference type="InterPro" id="IPR011333">
    <property type="entry name" value="SKP1/BTB/POZ_sf"/>
</dbReference>
<dbReference type="InterPro" id="IPR036236">
    <property type="entry name" value="Znf_C2H2_sf"/>
</dbReference>
<dbReference type="InterPro" id="IPR013087">
    <property type="entry name" value="Znf_C2H2_type"/>
</dbReference>
<dbReference type="PANTHER" id="PTHR24394:SF16">
    <property type="entry name" value="HYPERMETHYLATED IN CANCER 1 PROTEIN"/>
    <property type="match status" value="1"/>
</dbReference>
<dbReference type="PANTHER" id="PTHR24394">
    <property type="entry name" value="ZINC FINGER PROTEIN"/>
    <property type="match status" value="1"/>
</dbReference>
<dbReference type="Pfam" id="PF00651">
    <property type="entry name" value="BTB"/>
    <property type="match status" value="1"/>
</dbReference>
<dbReference type="Pfam" id="PF00096">
    <property type="entry name" value="zf-C2H2"/>
    <property type="match status" value="4"/>
</dbReference>
<dbReference type="SMART" id="SM00225">
    <property type="entry name" value="BTB"/>
    <property type="match status" value="1"/>
</dbReference>
<dbReference type="SMART" id="SM00355">
    <property type="entry name" value="ZnF_C2H2"/>
    <property type="match status" value="5"/>
</dbReference>
<dbReference type="SUPFAM" id="SSF57667">
    <property type="entry name" value="beta-beta-alpha zinc fingers"/>
    <property type="match status" value="3"/>
</dbReference>
<dbReference type="SUPFAM" id="SSF54695">
    <property type="entry name" value="POZ domain"/>
    <property type="match status" value="1"/>
</dbReference>
<dbReference type="PROSITE" id="PS50097">
    <property type="entry name" value="BTB"/>
    <property type="match status" value="1"/>
</dbReference>
<dbReference type="PROSITE" id="PS00028">
    <property type="entry name" value="ZINC_FINGER_C2H2_1"/>
    <property type="match status" value="5"/>
</dbReference>
<dbReference type="PROSITE" id="PS50157">
    <property type="entry name" value="ZINC_FINGER_C2H2_2"/>
    <property type="match status" value="5"/>
</dbReference>
<protein>
    <recommendedName>
        <fullName>Hypermethylated in cancer 1 protein</fullName>
        <shortName>Hic-1</shortName>
    </recommendedName>
</protein>
<keyword id="KW-0007">Acetylation</keyword>
<keyword id="KW-0025">Alternative splicing</keyword>
<keyword id="KW-0217">Developmental protein</keyword>
<keyword id="KW-0238">DNA-binding</keyword>
<keyword id="KW-1017">Isopeptide bond</keyword>
<keyword id="KW-0479">Metal-binding</keyword>
<keyword id="KW-0488">Methylation</keyword>
<keyword id="KW-0539">Nucleus</keyword>
<keyword id="KW-0597">Phosphoprotein</keyword>
<keyword id="KW-1185">Reference proteome</keyword>
<keyword id="KW-0677">Repeat</keyword>
<keyword id="KW-0678">Repressor</keyword>
<keyword id="KW-0804">Transcription</keyword>
<keyword id="KW-0805">Transcription regulation</keyword>
<keyword id="KW-0832">Ubl conjugation</keyword>
<keyword id="KW-0879">Wnt signaling pathway</keyword>
<keyword id="KW-0862">Zinc</keyword>
<keyword id="KW-0863">Zinc-finger</keyword>
<proteinExistence type="evidence at protein level"/>
<name>HIC1_MOUSE</name>